<gene>
    <name type="primary">RAD51</name>
</gene>
<keyword id="KW-0007">Acetylation</keyword>
<keyword id="KW-0067">ATP-binding</keyword>
<keyword id="KW-0158">Chromosome</keyword>
<keyword id="KW-0963">Cytoplasm</keyword>
<keyword id="KW-0206">Cytoskeleton</keyword>
<keyword id="KW-0227">DNA damage</keyword>
<keyword id="KW-0233">DNA recombination</keyword>
<keyword id="KW-0234">DNA repair</keyword>
<keyword id="KW-0238">DNA-binding</keyword>
<keyword id="KW-1017">Isopeptide bond</keyword>
<keyword id="KW-0496">Mitochondrion</keyword>
<keyword id="KW-0547">Nucleotide-binding</keyword>
<keyword id="KW-0539">Nucleus</keyword>
<keyword id="KW-0597">Phosphoprotein</keyword>
<keyword id="KW-1185">Reference proteome</keyword>
<keyword id="KW-0832">Ubl conjugation</keyword>
<evidence type="ECO:0000250" key="1">
    <source>
        <dbReference type="UniProtKB" id="Q06609"/>
    </source>
</evidence>
<evidence type="ECO:0000250" key="2">
    <source>
        <dbReference type="UniProtKB" id="Q08297"/>
    </source>
</evidence>
<evidence type="ECO:0000255" key="3"/>
<evidence type="ECO:0000269" key="4">
    <source>
    </source>
</evidence>
<evidence type="ECO:0000305" key="5"/>
<dbReference type="EMBL" id="AB043896">
    <property type="protein sequence ID" value="BAB91246.1"/>
    <property type="molecule type" value="mRNA"/>
</dbReference>
<dbReference type="RefSeq" id="NP_001003043.1">
    <property type="nucleotide sequence ID" value="NM_001003043.1"/>
</dbReference>
<dbReference type="RefSeq" id="XP_005638226.1">
    <property type="nucleotide sequence ID" value="XM_005638169.2"/>
</dbReference>
<dbReference type="RefSeq" id="XP_038297647.1">
    <property type="nucleotide sequence ID" value="XM_038441719.1"/>
</dbReference>
<dbReference type="SMR" id="Q8MKI8"/>
<dbReference type="FunCoup" id="Q8MKI8">
    <property type="interactions" value="1234"/>
</dbReference>
<dbReference type="IntAct" id="Q8MKI8">
    <property type="interactions" value="3"/>
</dbReference>
<dbReference type="MINT" id="Q8MKI8"/>
<dbReference type="STRING" id="9615.ENSCAFP00000058998"/>
<dbReference type="PaxDb" id="9612-ENSCAFP00000013557"/>
<dbReference type="Ensembl" id="ENSCAFT00000073671.2">
    <property type="protein sequence ID" value="ENSCAFP00000058998.2"/>
    <property type="gene ID" value="ENSCAFG00000009220.4"/>
</dbReference>
<dbReference type="Ensembl" id="ENSCAFT00030043413.1">
    <property type="protein sequence ID" value="ENSCAFP00030037898.1"/>
    <property type="gene ID" value="ENSCAFG00030023614.1"/>
</dbReference>
<dbReference type="Ensembl" id="ENSCAFT00040047921.1">
    <property type="protein sequence ID" value="ENSCAFP00040041838.1"/>
    <property type="gene ID" value="ENSCAFG00040025670.1"/>
</dbReference>
<dbReference type="Ensembl" id="ENSCAFT00845050790.1">
    <property type="protein sequence ID" value="ENSCAFP00845039817.1"/>
    <property type="gene ID" value="ENSCAFG00845028730.1"/>
</dbReference>
<dbReference type="GeneID" id="403568"/>
<dbReference type="KEGG" id="cfa:403568"/>
<dbReference type="CTD" id="5888"/>
<dbReference type="VEuPathDB" id="HostDB:ENSCAFG00845028730"/>
<dbReference type="VGNC" id="VGNC:45317">
    <property type="gene designation" value="RAD51"/>
</dbReference>
<dbReference type="eggNOG" id="KOG1433">
    <property type="taxonomic scope" value="Eukaryota"/>
</dbReference>
<dbReference type="GeneTree" id="ENSGT00940000156157"/>
<dbReference type="HOGENOM" id="CLU_041732_0_2_1"/>
<dbReference type="InParanoid" id="Q8MKI8"/>
<dbReference type="OMA" id="RAYNSNH"/>
<dbReference type="OrthoDB" id="10251254at2759"/>
<dbReference type="TreeFam" id="TF101218"/>
<dbReference type="Reactome" id="R-CFA-5685938">
    <property type="pathway name" value="HDR through Single Strand Annealing (SSA)"/>
</dbReference>
<dbReference type="Reactome" id="R-CFA-5685942">
    <property type="pathway name" value="HDR through Homologous Recombination (HRR)"/>
</dbReference>
<dbReference type="Reactome" id="R-CFA-5693568">
    <property type="pathway name" value="Resolution of D-loop Structures through Holliday Junction Intermediates"/>
</dbReference>
<dbReference type="Reactome" id="R-CFA-5693579">
    <property type="pathway name" value="Homologous DNA Pairing and Strand Exchange"/>
</dbReference>
<dbReference type="Reactome" id="R-CFA-5693616">
    <property type="pathway name" value="Presynaptic phase of homologous DNA pairing and strand exchange"/>
</dbReference>
<dbReference type="Reactome" id="R-CFA-912446">
    <property type="pathway name" value="Meiotic recombination"/>
</dbReference>
<dbReference type="Proteomes" id="UP000002254">
    <property type="component" value="Chromosome 30"/>
</dbReference>
<dbReference type="Proteomes" id="UP000694429">
    <property type="component" value="Chromosome 30"/>
</dbReference>
<dbReference type="Proteomes" id="UP000694542">
    <property type="component" value="Chromosome 30"/>
</dbReference>
<dbReference type="Proteomes" id="UP000805418">
    <property type="component" value="Chromosome 30"/>
</dbReference>
<dbReference type="GO" id="GO:0005813">
    <property type="term" value="C:centrosome"/>
    <property type="evidence" value="ECO:0007669"/>
    <property type="project" value="UniProtKB-SubCell"/>
</dbReference>
<dbReference type="GO" id="GO:0000785">
    <property type="term" value="C:chromatin"/>
    <property type="evidence" value="ECO:0007669"/>
    <property type="project" value="Ensembl"/>
</dbReference>
<dbReference type="GO" id="GO:0005694">
    <property type="term" value="C:chromosome"/>
    <property type="evidence" value="ECO:0000250"/>
    <property type="project" value="UniProtKB"/>
</dbReference>
<dbReference type="GO" id="GO:0000781">
    <property type="term" value="C:chromosome, telomeric region"/>
    <property type="evidence" value="ECO:0007669"/>
    <property type="project" value="Ensembl"/>
</dbReference>
<dbReference type="GO" id="GO:0000793">
    <property type="term" value="C:condensed chromosome"/>
    <property type="evidence" value="ECO:0000250"/>
    <property type="project" value="UniProtKB"/>
</dbReference>
<dbReference type="GO" id="GO:0000794">
    <property type="term" value="C:condensed nuclear chromosome"/>
    <property type="evidence" value="ECO:0000250"/>
    <property type="project" value="UniProtKB"/>
</dbReference>
<dbReference type="GO" id="GO:0005737">
    <property type="term" value="C:cytoplasm"/>
    <property type="evidence" value="ECO:0000250"/>
    <property type="project" value="UniProtKB"/>
</dbReference>
<dbReference type="GO" id="GO:0005829">
    <property type="term" value="C:cytosol"/>
    <property type="evidence" value="ECO:0007669"/>
    <property type="project" value="Ensembl"/>
</dbReference>
<dbReference type="GO" id="GO:0000800">
    <property type="term" value="C:lateral element"/>
    <property type="evidence" value="ECO:0007669"/>
    <property type="project" value="Ensembl"/>
</dbReference>
<dbReference type="GO" id="GO:0001673">
    <property type="term" value="C:male germ cell nucleus"/>
    <property type="evidence" value="ECO:0007669"/>
    <property type="project" value="Ensembl"/>
</dbReference>
<dbReference type="GO" id="GO:0005759">
    <property type="term" value="C:mitochondrial matrix"/>
    <property type="evidence" value="ECO:0007669"/>
    <property type="project" value="UniProtKB-SubCell"/>
</dbReference>
<dbReference type="GO" id="GO:0000228">
    <property type="term" value="C:nuclear chromosome"/>
    <property type="evidence" value="ECO:0000250"/>
    <property type="project" value="UniProtKB"/>
</dbReference>
<dbReference type="GO" id="GO:0000152">
    <property type="term" value="C:nuclear ubiquitin ligase complex"/>
    <property type="evidence" value="ECO:0007669"/>
    <property type="project" value="Ensembl"/>
</dbReference>
<dbReference type="GO" id="GO:0005730">
    <property type="term" value="C:nucleolus"/>
    <property type="evidence" value="ECO:0007669"/>
    <property type="project" value="Ensembl"/>
</dbReference>
<dbReference type="GO" id="GO:0005634">
    <property type="term" value="C:nucleus"/>
    <property type="evidence" value="ECO:0000250"/>
    <property type="project" value="UniProtKB"/>
</dbReference>
<dbReference type="GO" id="GO:0048471">
    <property type="term" value="C:perinuclear region of cytoplasm"/>
    <property type="evidence" value="ECO:0000250"/>
    <property type="project" value="UniProtKB"/>
</dbReference>
<dbReference type="GO" id="GO:0016605">
    <property type="term" value="C:PML body"/>
    <property type="evidence" value="ECO:0007669"/>
    <property type="project" value="Ensembl"/>
</dbReference>
<dbReference type="GO" id="GO:0099182">
    <property type="term" value="C:presynaptic intermediate filament cytoskeleton"/>
    <property type="evidence" value="ECO:0007669"/>
    <property type="project" value="Ensembl"/>
</dbReference>
<dbReference type="GO" id="GO:0035861">
    <property type="term" value="C:site of double-strand break"/>
    <property type="evidence" value="ECO:0000250"/>
    <property type="project" value="UniProtKB"/>
</dbReference>
<dbReference type="GO" id="GO:0005524">
    <property type="term" value="F:ATP binding"/>
    <property type="evidence" value="ECO:0007669"/>
    <property type="project" value="UniProtKB-KW"/>
</dbReference>
<dbReference type="GO" id="GO:0016887">
    <property type="term" value="F:ATP hydrolysis activity"/>
    <property type="evidence" value="ECO:0007669"/>
    <property type="project" value="InterPro"/>
</dbReference>
<dbReference type="GO" id="GO:0008094">
    <property type="term" value="F:ATP-dependent activity, acting on DNA"/>
    <property type="evidence" value="ECO:0000318"/>
    <property type="project" value="GO_Central"/>
</dbReference>
<dbReference type="GO" id="GO:0140664">
    <property type="term" value="F:ATP-dependent DNA damage sensor activity"/>
    <property type="evidence" value="ECO:0007669"/>
    <property type="project" value="InterPro"/>
</dbReference>
<dbReference type="GO" id="GO:0003682">
    <property type="term" value="F:chromatin binding"/>
    <property type="evidence" value="ECO:0007669"/>
    <property type="project" value="Ensembl"/>
</dbReference>
<dbReference type="GO" id="GO:0070182">
    <property type="term" value="F:DNA polymerase binding"/>
    <property type="evidence" value="ECO:0007669"/>
    <property type="project" value="Ensembl"/>
</dbReference>
<dbReference type="GO" id="GO:0000150">
    <property type="term" value="F:DNA strand exchange activity"/>
    <property type="evidence" value="ECO:0000318"/>
    <property type="project" value="GO_Central"/>
</dbReference>
<dbReference type="GO" id="GO:0003690">
    <property type="term" value="F:double-stranded DNA binding"/>
    <property type="evidence" value="ECO:0000250"/>
    <property type="project" value="UniProtKB"/>
</dbReference>
<dbReference type="GO" id="GO:0042802">
    <property type="term" value="F:identical protein binding"/>
    <property type="evidence" value="ECO:0007669"/>
    <property type="project" value="Ensembl"/>
</dbReference>
<dbReference type="GO" id="GO:0003697">
    <property type="term" value="F:single-stranded DNA binding"/>
    <property type="evidence" value="ECO:0000250"/>
    <property type="project" value="UniProtKB"/>
</dbReference>
<dbReference type="GO" id="GO:0017116">
    <property type="term" value="F:single-stranded DNA helicase activity"/>
    <property type="evidence" value="ECO:0000250"/>
    <property type="project" value="UniProtKB"/>
</dbReference>
<dbReference type="GO" id="GO:0072757">
    <property type="term" value="P:cellular response to camptothecin"/>
    <property type="evidence" value="ECO:0000250"/>
    <property type="project" value="UniProtKB"/>
</dbReference>
<dbReference type="GO" id="GO:0072711">
    <property type="term" value="P:cellular response to hydroxyurea"/>
    <property type="evidence" value="ECO:0007669"/>
    <property type="project" value="Ensembl"/>
</dbReference>
<dbReference type="GO" id="GO:0071479">
    <property type="term" value="P:cellular response to ionizing radiation"/>
    <property type="evidence" value="ECO:0000250"/>
    <property type="project" value="UniProtKB"/>
</dbReference>
<dbReference type="GO" id="GO:0070192">
    <property type="term" value="P:chromosome organization involved in meiotic cell cycle"/>
    <property type="evidence" value="ECO:0000318"/>
    <property type="project" value="GO_Central"/>
</dbReference>
<dbReference type="GO" id="GO:0006974">
    <property type="term" value="P:DNA damage response"/>
    <property type="evidence" value="ECO:0000250"/>
    <property type="project" value="UniProtKB"/>
</dbReference>
<dbReference type="GO" id="GO:0000730">
    <property type="term" value="P:DNA recombinase assembly"/>
    <property type="evidence" value="ECO:0000250"/>
    <property type="project" value="UniProtKB"/>
</dbReference>
<dbReference type="GO" id="GO:0042148">
    <property type="term" value="P:DNA strand invasion"/>
    <property type="evidence" value="ECO:0000318"/>
    <property type="project" value="GO_Central"/>
</dbReference>
<dbReference type="GO" id="GO:1990918">
    <property type="term" value="P:double-strand break repair involved in meiotic recombination"/>
    <property type="evidence" value="ECO:0007669"/>
    <property type="project" value="Ensembl"/>
</dbReference>
<dbReference type="GO" id="GO:0000724">
    <property type="term" value="P:double-strand break repair via homologous recombination"/>
    <property type="evidence" value="ECO:0000250"/>
    <property type="project" value="UniProtKB"/>
</dbReference>
<dbReference type="GO" id="GO:0036297">
    <property type="term" value="P:interstrand cross-link repair"/>
    <property type="evidence" value="ECO:0000250"/>
    <property type="project" value="UniProtKB"/>
</dbReference>
<dbReference type="GO" id="GO:0051321">
    <property type="term" value="P:meiotic cell cycle"/>
    <property type="evidence" value="ECO:0000250"/>
    <property type="project" value="UniProtKB"/>
</dbReference>
<dbReference type="GO" id="GO:0006312">
    <property type="term" value="P:mitotic recombination"/>
    <property type="evidence" value="ECO:0000318"/>
    <property type="project" value="GO_Central"/>
</dbReference>
<dbReference type="GO" id="GO:1990426">
    <property type="term" value="P:mitotic recombination-dependent replication fork processing"/>
    <property type="evidence" value="ECO:0007669"/>
    <property type="project" value="InterPro"/>
</dbReference>
<dbReference type="GO" id="GO:0007131">
    <property type="term" value="P:reciprocal meiotic recombination"/>
    <property type="evidence" value="ECO:0000318"/>
    <property type="project" value="GO_Central"/>
</dbReference>
<dbReference type="GO" id="GO:0010569">
    <property type="term" value="P:regulation of double-strand break repair via homologous recombination"/>
    <property type="evidence" value="ECO:0000250"/>
    <property type="project" value="UniProtKB"/>
</dbReference>
<dbReference type="GO" id="GO:1990414">
    <property type="term" value="P:replication-born double-strand break repair via sister chromatid exchange"/>
    <property type="evidence" value="ECO:0007669"/>
    <property type="project" value="Ensembl"/>
</dbReference>
<dbReference type="GO" id="GO:0000722">
    <property type="term" value="P:telomere maintenance via recombination"/>
    <property type="evidence" value="ECO:0007669"/>
    <property type="project" value="Ensembl"/>
</dbReference>
<dbReference type="GO" id="GO:0010833">
    <property type="term" value="P:telomere maintenance via telomere lengthening"/>
    <property type="evidence" value="ECO:0007669"/>
    <property type="project" value="Ensembl"/>
</dbReference>
<dbReference type="CDD" id="cd19513">
    <property type="entry name" value="Rad51"/>
    <property type="match status" value="1"/>
</dbReference>
<dbReference type="FunFam" id="1.10.150.20:FF:000029">
    <property type="entry name" value="DNA repair protein RAD51 homolog"/>
    <property type="match status" value="1"/>
</dbReference>
<dbReference type="FunFam" id="3.40.50.300:FF:000092">
    <property type="entry name" value="DNA repair protein Rad51 homolog"/>
    <property type="match status" value="1"/>
</dbReference>
<dbReference type="Gene3D" id="1.10.150.20">
    <property type="entry name" value="5' to 3' exonuclease, C-terminal subdomain"/>
    <property type="match status" value="1"/>
</dbReference>
<dbReference type="Gene3D" id="3.40.50.300">
    <property type="entry name" value="P-loop containing nucleotide triphosphate hydrolases"/>
    <property type="match status" value="1"/>
</dbReference>
<dbReference type="InterPro" id="IPR003593">
    <property type="entry name" value="AAA+_ATPase"/>
</dbReference>
<dbReference type="InterPro" id="IPR011941">
    <property type="entry name" value="DNA_recomb/repair_Rad51"/>
</dbReference>
<dbReference type="InterPro" id="IPR013632">
    <property type="entry name" value="DNA_recomb/repair_Rad51_C"/>
</dbReference>
<dbReference type="InterPro" id="IPR016467">
    <property type="entry name" value="DNA_recomb/repair_RecA-like"/>
</dbReference>
<dbReference type="InterPro" id="IPR010995">
    <property type="entry name" value="DNA_repair_Rad51/TF_NusA_a-hlx"/>
</dbReference>
<dbReference type="InterPro" id="IPR027417">
    <property type="entry name" value="P-loop_NTPase"/>
</dbReference>
<dbReference type="InterPro" id="IPR020588">
    <property type="entry name" value="RecA_ATP-bd"/>
</dbReference>
<dbReference type="InterPro" id="IPR020587">
    <property type="entry name" value="RecA_monomer-monomer_interface"/>
</dbReference>
<dbReference type="NCBIfam" id="NF003301">
    <property type="entry name" value="PRK04301.1"/>
    <property type="match status" value="1"/>
</dbReference>
<dbReference type="NCBIfam" id="TIGR02239">
    <property type="entry name" value="recomb_RAD51"/>
    <property type="match status" value="1"/>
</dbReference>
<dbReference type="PANTHER" id="PTHR22942:SF39">
    <property type="entry name" value="DNA REPAIR PROTEIN RAD51 HOMOLOG 1"/>
    <property type="match status" value="1"/>
</dbReference>
<dbReference type="PANTHER" id="PTHR22942">
    <property type="entry name" value="RECA/RAD51/RADA DNA STRAND-PAIRING FAMILY MEMBER"/>
    <property type="match status" value="1"/>
</dbReference>
<dbReference type="Pfam" id="PF14520">
    <property type="entry name" value="HHH_5"/>
    <property type="match status" value="1"/>
</dbReference>
<dbReference type="Pfam" id="PF08423">
    <property type="entry name" value="Rad51"/>
    <property type="match status" value="1"/>
</dbReference>
<dbReference type="PIRSF" id="PIRSF005856">
    <property type="entry name" value="Rad51"/>
    <property type="match status" value="1"/>
</dbReference>
<dbReference type="SMART" id="SM00382">
    <property type="entry name" value="AAA"/>
    <property type="match status" value="1"/>
</dbReference>
<dbReference type="SUPFAM" id="SSF52540">
    <property type="entry name" value="P-loop containing nucleoside triphosphate hydrolases"/>
    <property type="match status" value="1"/>
</dbReference>
<dbReference type="SUPFAM" id="SSF47794">
    <property type="entry name" value="Rad51 N-terminal domain-like"/>
    <property type="match status" value="1"/>
</dbReference>
<dbReference type="PROSITE" id="PS50162">
    <property type="entry name" value="RECA_2"/>
    <property type="match status" value="1"/>
</dbReference>
<dbReference type="PROSITE" id="PS50163">
    <property type="entry name" value="RECA_3"/>
    <property type="match status" value="1"/>
</dbReference>
<name>RAD51_CANLF</name>
<comment type="function">
    <text evidence="1">Plays an important role in homologous strand exchange, a key step in DNA repair through homologous recombination (HR). Binds to single-stranded DNA in an ATP-dependent manner to form nucleoprotein filaments which are essential for the homology search and strand exchange. Catalyzes the recognition of homology and strand exchange between homologous DNA partners to form a joint molecule between a processed DNA break and the repair template. Recruited to resolve stalled replication forks during replication stress. Part of a PALB2-scaffolded HR complex containing BRCA2 and RAD51C and which is thought to play a role in DNA repair by HR. Plays a role in regulating mitochondrial DNA copy number under conditions of oxidative stress in the presence of RAD51C and XRCC3. Also involved in interstrand cross-link repair.</text>
</comment>
<comment type="subunit">
    <text evidence="1 2">Forms linear homooligomers, giving rise to a RAD51 nucleoprotein filament, which is essential for strand-pairing reactions during DNA recombination. Interacts with BRCA1 and either directly or indirectly with p53. Interacts with XRCC3, RAD54L and RAD54B. Interacts with the BCDX2 subcomplex RAD51C:RAD51B. Component of the homologous recombination repair (HR) complex composed of ERCC5/XPG, BRCA2, PALB2, DSS1 and RAD51. Interacts directly with PALB2 which may serve as a scaffold for a HR complex containing PALB2, BRCA2, RAD51C, RAD51 and XRCC3. Interacts with RAD51AP1 and RAD51AP2. Interacts with CHEK1, and this may require prior phosphorylation of CHEK1. Interacts with the MND1-PSMC3IP heterodimer. Found in a complex, at least composed of BLM, RAD51 and SPIDR; the complex formation is mediated by SPIDR. Interacts with SPIDR; the interaction is direct and recruits RAD51 to DNA damage sites. Interacts with FIGNL1 (via N-terminal one-half region); the interaction is direct. Interacts with RAD51AP1 (via C-terminal region); the interaction is direct. Interacts with NABP2, RPA1, PALB2 and RAD51. Interacts with SWI5/C9orf119, and at lower level with SFR1/MEIR5. Interacts with hyperphosphorylated RPA2; this interaction is necessary for efficient recruitment to chromatin in response to DNA damage. Interacts with SWSAP1; involved in homologous recombination repair. Interacts with PARPBP, BRCA2 and RECQL5; these interactions interfere with the formation of the RAD51-DNA homologous recombination structure. Interacts with POLQ; POLQ acts as an inhibitor of homology-recombination repair (HR) pathway by limiting RAD51 accumulation at resected ends. Interacts with FBH1. Interacts with POLN. Interacts with RFWD3. Interacts with the MCM8-MCM9 complex; the interaction recruits RAD51 to DNA damage sites (By similarity). Component of a multiprotein complex with MEIOB and SPATA22. Interacts with the complex BRME1:HSF2BP:BRCA2 (By similarity). Interacts with HELQ; stimulating HELQ DNA helicase activity and ability to unwing DNA. Interacts with MMS22L; the interaction is direct and promotes recruitment of RAD51 to sites of DNA damage. Interacts with the ATAD5 RFC-like complex. Within the ATAD5 RFC-like complex, interacts with ATAD5 (via N-terminus); the interaction is direct and enhanced under replication stress. Interacts with WDR48; the interaction is enhanced under replication stress (By similarity). Interacts with DNA helicase ZGRF1; the interaction promotes RAD51 strand exchange activity (By similarity). Interacts (when phosphorylated) with TOPBP1; interaction takes place following phosphorylation by CK2 and PLK1 and promotes recruitment to DNA damage sites (By similarity). Interacts with GRB2; this interaction inhibits RAD51 ATPase activity to stabilize RAD51 on stalled replication forks (By similarity).</text>
</comment>
<comment type="subcellular location">
    <subcellularLocation>
        <location evidence="1">Nucleus</location>
    </subcellularLocation>
    <subcellularLocation>
        <location evidence="1">Cytoplasm</location>
    </subcellularLocation>
    <subcellularLocation>
        <location evidence="1">Cytoplasm</location>
        <location evidence="1">Perinuclear region</location>
    </subcellularLocation>
    <subcellularLocation>
        <location evidence="1">Mitochondrion matrix</location>
    </subcellularLocation>
    <subcellularLocation>
        <location evidence="1">Chromosome</location>
    </subcellularLocation>
    <subcellularLocation>
        <location evidence="1">Cytoplasm</location>
        <location evidence="1">Cytoskeleton</location>
        <location evidence="1">Microtubule organizing center</location>
        <location evidence="1">Centrosome</location>
    </subcellularLocation>
    <text evidence="1">Colocalizes with RAD51AP1 and RPA2 to multiple nuclear foci upon induction of DNA damage. DNA damage induces an increase in nuclear levels. Together with FIGNL1, redistributed in discrete nuclear DNA damage-induced foci after ionizing radiation (IR) or camptothecin (CPT) treatment. Accumulated at sites of DNA damage in a SPIDR-dependent manner. Recruited at sites of DNA damage in a MCM9-MCM8-dependent manner. Recruited at sites of DNA damage following interaction with TOPBP1 in S-phase. Colocalizes with ERCC5/XPG to nuclear foci in S phase. Recruited to stalled replication forks during replication stress by the TONSL-MMS22L complex, as well as ATAD5 and WDR48 in an ATR-dependent manner.</text>
</comment>
<comment type="tissue specificity">
    <text evidence="4">Expressed in the mammary gland.</text>
</comment>
<comment type="PTM">
    <text evidence="1">Ubiquitinated by the SCF(FBH1) E3 ubiquitin ligase complex, regulating RAD51 subcellular location and preventing its association with DNA. Ubiquitinated by RFWD3 in response to DNA damage: ubiquitination leads to degradation by the proteasome, promoting homologous recombination.</text>
</comment>
<comment type="PTM">
    <text evidence="1">Phosphorylation of Thr-309 by CHEK1 may enhance association with chromatin at sites of DNA damage and promote DNA repair by homologous recombination. Phosphorylated at Ser-14 by PLK1, triggering phosphorylation at Thr-13 by CK2, thereby promoting interaction with TOPBP1 and recruitment to DNA damage sites during S-phase. Phosphorylation by ABL1 inhibits function.</text>
</comment>
<comment type="similarity">
    <text evidence="5">Belongs to the RecA family. RAD51 subfamily.</text>
</comment>
<accession>Q8MKI8</accession>
<proteinExistence type="evidence at transcript level"/>
<sequence length="339" mass="36955">MAMQMQLEANADTSVEEESFGPQPISRLEQCGINANDVKKLEEAGFHTVEAVAYAPKKELISIKGISEAKADKILTEAAKLVPMGFTTATEFHQRRSEIIQITTGSKELDKLLQGGIETGSITEMFGEFRTGKTQICHTLAVTCQLPIDRGGGEGKAMYIDTEGTFRPERLLAVAERYGLSGSDVLDNVAYARGFNTDHQTQLLYQASAMMVESRYALLIVDSATALYRTDYSGRGELSARQMHLARFLRMLLRLADEFGVAVVITNQVVAQVDGAAMFAADPKKPIGGNIIAHASTTRLYLRKGRGETRICKIYDSPCLPEAEAMFAINADGVGDAKD</sequence>
<feature type="initiator methionine" description="Removed" evidence="1">
    <location>
        <position position="1"/>
    </location>
</feature>
<feature type="chain" id="PRO_0000122930" description="DNA repair protein RAD51 homolog 1">
    <location>
        <begin position="2"/>
        <end position="339"/>
    </location>
</feature>
<feature type="domain" description="HhH">
    <location>
        <begin position="48"/>
        <end position="77"/>
    </location>
</feature>
<feature type="region of interest" description="Interaction with PALB2" evidence="1">
    <location>
        <begin position="184"/>
        <end position="257"/>
    </location>
</feature>
<feature type="short sequence motif" description="Nuclear export signal; masked by the interaction with BRCA2" evidence="1">
    <location>
        <begin position="245"/>
        <end position="260"/>
    </location>
</feature>
<feature type="binding site" evidence="3">
    <location>
        <begin position="127"/>
        <end position="134"/>
    </location>
    <ligand>
        <name>ATP</name>
        <dbReference type="ChEBI" id="CHEBI:30616"/>
    </ligand>
</feature>
<feature type="modified residue" description="N-acetylalanine" evidence="1">
    <location>
        <position position="2"/>
    </location>
</feature>
<feature type="modified residue" description="Phosphothreonine" evidence="1">
    <location>
        <position position="13"/>
    </location>
</feature>
<feature type="modified residue" description="Phosphoserine" evidence="1">
    <location>
        <position position="14"/>
    </location>
</feature>
<feature type="modified residue" description="Phosphotyrosine" evidence="1">
    <location>
        <position position="54"/>
    </location>
</feature>
<feature type="modified residue" description="Phosphothreonine; by CHEK1" evidence="1">
    <location>
        <position position="309"/>
    </location>
</feature>
<feature type="cross-link" description="Glycyl lysine isopeptide (Lys-Gly) (interchain with G-Cter in ubiquitin)" evidence="1">
    <location>
        <position position="58"/>
    </location>
</feature>
<feature type="cross-link" description="Glycyl lysine isopeptide (Lys-Gly) (interchain with G-Cter in ubiquitin)" evidence="1">
    <location>
        <position position="64"/>
    </location>
</feature>
<organism>
    <name type="scientific">Canis lupus familiaris</name>
    <name type="common">Dog</name>
    <name type="synonym">Canis familiaris</name>
    <dbReference type="NCBI Taxonomy" id="9615"/>
    <lineage>
        <taxon>Eukaryota</taxon>
        <taxon>Metazoa</taxon>
        <taxon>Chordata</taxon>
        <taxon>Craniata</taxon>
        <taxon>Vertebrata</taxon>
        <taxon>Euteleostomi</taxon>
        <taxon>Mammalia</taxon>
        <taxon>Eutheria</taxon>
        <taxon>Laurasiatheria</taxon>
        <taxon>Carnivora</taxon>
        <taxon>Caniformia</taxon>
        <taxon>Canidae</taxon>
        <taxon>Canis</taxon>
    </lineage>
</organism>
<reference key="1">
    <citation type="journal article" date="2001" name="J. Vet. Med. Sci.">
        <title>Cloning and sequencing full length of canine Brca2 and Rad51 cDNA.</title>
        <authorList>
            <person name="Ochiai K."/>
            <person name="Morimatsu M."/>
            <person name="Tomizawa N."/>
            <person name="Syuto B."/>
        </authorList>
    </citation>
    <scope>NUCLEOTIDE SEQUENCE [MRNA]</scope>
    <scope>TISSUE SPECIFICITY</scope>
</reference>
<protein>
    <recommendedName>
        <fullName>DNA repair protein RAD51 homolog 1</fullName>
    </recommendedName>
    <alternativeName>
        <fullName>cRad51</fullName>
    </alternativeName>
</protein>